<evidence type="ECO:0000250" key="1">
    <source>
        <dbReference type="UniProtKB" id="A0A0H2ZQB9"/>
    </source>
</evidence>
<evidence type="ECO:0000255" key="2"/>
<evidence type="ECO:0000255" key="3">
    <source>
        <dbReference type="PROSITE-ProRule" id="PRU00441"/>
    </source>
</evidence>
<evidence type="ECO:0000269" key="4">
    <source>
    </source>
</evidence>
<evidence type="ECO:0000269" key="5">
    <source>
    </source>
</evidence>
<evidence type="ECO:0000269" key="6">
    <source ref="4"/>
</evidence>
<evidence type="ECO:0000303" key="7">
    <source>
    </source>
</evidence>
<evidence type="ECO:0000303" key="8">
    <source>
    </source>
</evidence>
<evidence type="ECO:0000305" key="9"/>
<evidence type="ECO:0000312" key="10">
    <source>
        <dbReference type="EMBL" id="CAC99500.1"/>
    </source>
</evidence>
<evidence type="ECO:0000312" key="11">
    <source>
        <dbReference type="Proteomes" id="UP000000817"/>
    </source>
</evidence>
<evidence type="ECO:0007744" key="12">
    <source>
        <dbReference type="PDB" id="4Z7E"/>
    </source>
</evidence>
<evidence type="ECO:0007829" key="13">
    <source>
        <dbReference type="PDB" id="4Z7E"/>
    </source>
</evidence>
<protein>
    <recommendedName>
        <fullName evidence="8">Probable ergothioneine transporter EgtUBC</fullName>
    </recommendedName>
</protein>
<accession>Q8Y775</accession>
<organism evidence="11">
    <name type="scientific">Listeria monocytogenes serovar 1/2a (strain ATCC BAA-679 / EGD-e)</name>
    <dbReference type="NCBI Taxonomy" id="169963"/>
    <lineage>
        <taxon>Bacteria</taxon>
        <taxon>Bacillati</taxon>
        <taxon>Bacillota</taxon>
        <taxon>Bacilli</taxon>
        <taxon>Bacillales</taxon>
        <taxon>Listeriaceae</taxon>
        <taxon>Listeria</taxon>
    </lineage>
</organism>
<sequence length="504" mass="55696">MNTLIDTFTVRKDELFTALVQHIQISFVSLFIAVLIALPLGIYLTRHKRLAEPIIQVAAIFQTIPSLALLGLLIPLVGIGIVPAIIALVIYALLPILRNTYTGIKEVDPALVEASRAMGMNKWKRLYKVQLPLAMPVIMAGIRTAMVLIIGTATLAALIGAGGLGDLILLGIDRNDNSLILLGAIPAALLAILFDFLLRFLEKASFKSTIITISAGILLTAAIIVVPYFASDKKEITIAGKLGAEPEILINMYKLVIEDETDLKVNVKPNMGKTSFVFNALKSGDIDIYPEFTGTVLETFLKENAKTHDPEEVYTQARDGLAKDFDMTYLKPMKYNNTYALAVSPEFAKENNLEKISDLGPVSDQVKAGFTLEFKDRSDGYKGIQDKYGLTFSNLKTMEPKLRYNAIKSGDINLLDAYSTDSELAQYKLKVLEDDQQLFPPYQGAPLMLTKTLDKYPELKKPLNKLAGKITDDEMRKMNYEVNVNGKSAYTVAKDYLKDQGIIK</sequence>
<name>EGTUB_LISMO</name>
<dbReference type="EMBL" id="AL591979">
    <property type="protein sequence ID" value="CAC99500.1"/>
    <property type="molecule type" value="Genomic_DNA"/>
</dbReference>
<dbReference type="PIR" id="AF1252">
    <property type="entry name" value="AF1252"/>
</dbReference>
<dbReference type="RefSeq" id="NP_464947.1">
    <property type="nucleotide sequence ID" value="NC_003210.1"/>
</dbReference>
<dbReference type="RefSeq" id="WP_010990118.1">
    <property type="nucleotide sequence ID" value="NZ_CP149495.1"/>
</dbReference>
<dbReference type="PDB" id="4Z7E">
    <property type="method" value="X-ray"/>
    <property type="resolution" value="1.50 A"/>
    <property type="chains" value="A/B=231-504"/>
</dbReference>
<dbReference type="PDBsum" id="4Z7E"/>
<dbReference type="SMR" id="Q8Y775"/>
<dbReference type="STRING" id="169963.gene:17594079"/>
<dbReference type="PaxDb" id="169963-lmo1422"/>
<dbReference type="EnsemblBacteria" id="CAC99500">
    <property type="protein sequence ID" value="CAC99500"/>
    <property type="gene ID" value="CAC99500"/>
</dbReference>
<dbReference type="GeneID" id="986774"/>
<dbReference type="KEGG" id="lmo:lmo1422"/>
<dbReference type="PATRIC" id="fig|169963.11.peg.1461"/>
<dbReference type="eggNOG" id="COG1174">
    <property type="taxonomic scope" value="Bacteria"/>
</dbReference>
<dbReference type="eggNOG" id="COG1732">
    <property type="taxonomic scope" value="Bacteria"/>
</dbReference>
<dbReference type="HOGENOM" id="CLU_038355_0_1_9"/>
<dbReference type="OrthoDB" id="9801163at2"/>
<dbReference type="PhylomeDB" id="Q8Y775"/>
<dbReference type="BioCyc" id="LMON169963:LMO1422-MONOMER"/>
<dbReference type="EvolutionaryTrace" id="Q8Y775"/>
<dbReference type="Proteomes" id="UP000000817">
    <property type="component" value="Chromosome"/>
</dbReference>
<dbReference type="GO" id="GO:0043190">
    <property type="term" value="C:ATP-binding cassette (ABC) transporter complex"/>
    <property type="evidence" value="ECO:0007669"/>
    <property type="project" value="InterPro"/>
</dbReference>
<dbReference type="GO" id="GO:0016597">
    <property type="term" value="F:amino acid binding"/>
    <property type="evidence" value="ECO:0000314"/>
    <property type="project" value="UniProtKB"/>
</dbReference>
<dbReference type="GO" id="GO:0022857">
    <property type="term" value="F:transmembrane transporter activity"/>
    <property type="evidence" value="ECO:0007669"/>
    <property type="project" value="InterPro"/>
</dbReference>
<dbReference type="GO" id="GO:0031460">
    <property type="term" value="P:glycine betaine transport"/>
    <property type="evidence" value="ECO:0000318"/>
    <property type="project" value="GO_Central"/>
</dbReference>
<dbReference type="GO" id="GO:0009432">
    <property type="term" value="P:SOS response"/>
    <property type="evidence" value="ECO:0000269"/>
    <property type="project" value="CollecTF"/>
</dbReference>
<dbReference type="CDD" id="cd13610">
    <property type="entry name" value="PBP2_ChoS"/>
    <property type="match status" value="1"/>
</dbReference>
<dbReference type="CDD" id="cd06261">
    <property type="entry name" value="TM_PBP2"/>
    <property type="match status" value="1"/>
</dbReference>
<dbReference type="FunFam" id="1.10.3720.10:FF:000001">
    <property type="entry name" value="Glycine betaine ABC transporter, permease"/>
    <property type="match status" value="1"/>
</dbReference>
<dbReference type="FunFam" id="3.40.190.120:FF:000002">
    <property type="entry name" value="Osmoprotectant ABC transporter, permease protein"/>
    <property type="match status" value="1"/>
</dbReference>
<dbReference type="Gene3D" id="1.10.3720.10">
    <property type="entry name" value="MetI-like"/>
    <property type="match status" value="1"/>
</dbReference>
<dbReference type="Gene3D" id="3.40.190.120">
    <property type="entry name" value="Osmoprotection protein (prox), domain 2"/>
    <property type="match status" value="1"/>
</dbReference>
<dbReference type="Gene3D" id="3.40.190.10">
    <property type="entry name" value="Periplasmic binding protein-like II"/>
    <property type="match status" value="1"/>
</dbReference>
<dbReference type="InterPro" id="IPR007210">
    <property type="entry name" value="ABC_Gly_betaine_transp_sub-bd"/>
</dbReference>
<dbReference type="InterPro" id="IPR051204">
    <property type="entry name" value="ABC_transp_perm/SBD"/>
</dbReference>
<dbReference type="InterPro" id="IPR000515">
    <property type="entry name" value="MetI-like"/>
</dbReference>
<dbReference type="InterPro" id="IPR035906">
    <property type="entry name" value="MetI-like_sf"/>
</dbReference>
<dbReference type="PANTHER" id="PTHR30177">
    <property type="entry name" value="GLYCINE BETAINE/L-PROLINE TRANSPORT SYSTEM PERMEASE PROTEIN PROW"/>
    <property type="match status" value="1"/>
</dbReference>
<dbReference type="PANTHER" id="PTHR30177:SF4">
    <property type="entry name" value="OSMOPROTECTANT IMPORT PERMEASE PROTEIN OSMW"/>
    <property type="match status" value="1"/>
</dbReference>
<dbReference type="Pfam" id="PF00528">
    <property type="entry name" value="BPD_transp_1"/>
    <property type="match status" value="1"/>
</dbReference>
<dbReference type="Pfam" id="PF04069">
    <property type="entry name" value="OpuAC"/>
    <property type="match status" value="1"/>
</dbReference>
<dbReference type="SUPFAM" id="SSF161098">
    <property type="entry name" value="MetI-like"/>
    <property type="match status" value="1"/>
</dbReference>
<dbReference type="SUPFAM" id="SSF53850">
    <property type="entry name" value="Periplasmic binding protein-like II"/>
    <property type="match status" value="1"/>
</dbReference>
<dbReference type="PROSITE" id="PS50928">
    <property type="entry name" value="ABC_TM1"/>
    <property type="match status" value="1"/>
</dbReference>
<keyword id="KW-0002">3D-structure</keyword>
<keyword id="KW-0472">Membrane</keyword>
<keyword id="KW-1185">Reference proteome</keyword>
<keyword id="KW-0346">Stress response</keyword>
<keyword id="KW-0812">Transmembrane</keyword>
<keyword id="KW-1133">Transmembrane helix</keyword>
<keyword id="KW-0813">Transport</keyword>
<keyword id="KW-0843">Virulence</keyword>
<reference evidence="11" key="1">
    <citation type="journal article" date="2001" name="Science">
        <title>Comparative genomics of Listeria species.</title>
        <authorList>
            <person name="Glaser P."/>
            <person name="Frangeul L."/>
            <person name="Buchrieser C."/>
            <person name="Rusniok C."/>
            <person name="Amend A."/>
            <person name="Baquero F."/>
            <person name="Berche P."/>
            <person name="Bloecker H."/>
            <person name="Brandt P."/>
            <person name="Chakraborty T."/>
            <person name="Charbit A."/>
            <person name="Chetouani F."/>
            <person name="Couve E."/>
            <person name="de Daruvar A."/>
            <person name="Dehoux P."/>
            <person name="Domann E."/>
            <person name="Dominguez-Bernal G."/>
            <person name="Duchaud E."/>
            <person name="Durant L."/>
            <person name="Dussurget O."/>
            <person name="Entian K.-D."/>
            <person name="Fsihi H."/>
            <person name="Garcia-del Portillo F."/>
            <person name="Garrido P."/>
            <person name="Gautier L."/>
            <person name="Goebel W."/>
            <person name="Gomez-Lopez N."/>
            <person name="Hain T."/>
            <person name="Hauf J."/>
            <person name="Jackson D."/>
            <person name="Jones L.-M."/>
            <person name="Kaerst U."/>
            <person name="Kreft J."/>
            <person name="Kuhn M."/>
            <person name="Kunst F."/>
            <person name="Kurapkat G."/>
            <person name="Madueno E."/>
            <person name="Maitournam A."/>
            <person name="Mata Vicente J."/>
            <person name="Ng E."/>
            <person name="Nedjari H."/>
            <person name="Nordsiek G."/>
            <person name="Novella S."/>
            <person name="de Pablos B."/>
            <person name="Perez-Diaz J.-C."/>
            <person name="Purcell R."/>
            <person name="Remmel B."/>
            <person name="Rose M."/>
            <person name="Schlueter T."/>
            <person name="Simoes N."/>
            <person name="Tierrez A."/>
            <person name="Vazquez-Boland J.-A."/>
            <person name="Voss H."/>
            <person name="Wehland J."/>
            <person name="Cossart P."/>
        </authorList>
    </citation>
    <scope>NUCLEOTIDE SEQUENCE [LARGE SCALE GENOMIC DNA]</scope>
    <source>
        <strain evidence="11">ATCC BAA-679 / EGD-e</strain>
    </source>
</reference>
<reference evidence="9" key="2">
    <citation type="journal article" date="2005" name="Mol. Microbiol.">
        <title>A PrfA-regulated bile exclusion system (BilE) is a novel virulence factor in Listeria monocytogenes.</title>
        <authorList>
            <person name="Sleator R.D."/>
            <person name="Wemekamp-Kamphuis H.H."/>
            <person name="Gahan C.G."/>
            <person name="Abee T."/>
            <person name="Hill C."/>
        </authorList>
    </citation>
    <scope>FUNCTION</scope>
    <scope>DISRUPTION PHENOTYPE</scope>
    <source>
        <strain evidence="7">LO28 / Serovar 1/2c</strain>
    </source>
</reference>
<reference evidence="9" key="3">
    <citation type="journal article" date="2022" name="Nat. Commun.">
        <title>Discovery and structure of a widespread bacterial ABC transporter specific for ergothioneine.</title>
        <authorList>
            <person name="Zhang Y."/>
            <person name="Gonzalez-Gutierrez G."/>
            <person name="Legg K.A."/>
            <person name="Walsh B.J.C."/>
            <person name="Pis Diez C.M."/>
            <person name="Edmonds K.A."/>
            <person name="Giedroc D.P."/>
        </authorList>
    </citation>
    <scope>FUNCTION</scope>
    <scope>DOMAIN</scope>
    <source>
        <strain evidence="8">10403S</strain>
    </source>
</reference>
<reference evidence="12" key="4">
    <citation type="journal article" date="2016" name="Crystals">
        <title>Crystal Structure of the Substrate-Binding Domain from Listeria monocytogenes Bile-Resistance Determinant BilE.</title>
        <authorList>
            <person name="Ruiz S.J."/>
            <person name="Schuurman-Wolters G.K."/>
            <person name="Poolman B."/>
        </authorList>
    </citation>
    <scope>X-RAY CRYSTALLOGRAPHY (1.50 ANGSTROMS) OF 231-504</scope>
    <scope>FUNCTION</scope>
    <source>
        <strain evidence="11">ATCC BAA-679 / EGD-e</strain>
    </source>
</reference>
<feature type="chain" id="PRO_0000458773" description="Probable ergothioneine transporter EgtUBC">
    <location>
        <begin position="1"/>
        <end position="504"/>
    </location>
</feature>
<feature type="transmembrane region" description="Helical" evidence="3">
    <location>
        <begin position="25"/>
        <end position="44"/>
    </location>
</feature>
<feature type="transmembrane region" description="Helical" evidence="3">
    <location>
        <begin position="57"/>
        <end position="74"/>
    </location>
</feature>
<feature type="transmembrane region" description="Helical" evidence="3">
    <location>
        <begin position="81"/>
        <end position="97"/>
    </location>
</feature>
<feature type="transmembrane region" description="Helical" evidence="3">
    <location>
        <begin position="146"/>
        <end position="170"/>
    </location>
</feature>
<feature type="transmembrane region" description="Helical" evidence="3">
    <location>
        <begin position="179"/>
        <end position="198"/>
    </location>
</feature>
<feature type="transmembrane region" description="Helical" evidence="2">
    <location>
        <begin position="210"/>
        <end position="229"/>
    </location>
</feature>
<feature type="domain" description="ABC transmembrane type-1" evidence="3">
    <location>
        <begin position="19"/>
        <end position="198"/>
    </location>
</feature>
<feature type="region of interest" description="Ergothioneine binding domain" evidence="8">
    <location>
        <begin position="231"/>
        <end position="504"/>
    </location>
</feature>
<feature type="strand" evidence="13">
    <location>
        <begin position="236"/>
        <end position="243"/>
    </location>
</feature>
<feature type="helix" evidence="13">
    <location>
        <begin position="244"/>
        <end position="260"/>
    </location>
</feature>
<feature type="strand" evidence="13">
    <location>
        <begin position="265"/>
        <end position="272"/>
    </location>
</feature>
<feature type="helix" evidence="13">
    <location>
        <begin position="274"/>
        <end position="282"/>
    </location>
</feature>
<feature type="strand" evidence="13">
    <location>
        <begin position="287"/>
        <end position="292"/>
    </location>
</feature>
<feature type="helix" evidence="13">
    <location>
        <begin position="293"/>
        <end position="299"/>
    </location>
</feature>
<feature type="helix" evidence="13">
    <location>
        <begin position="310"/>
        <end position="325"/>
    </location>
</feature>
<feature type="strand" evidence="13">
    <location>
        <begin position="327"/>
        <end position="329"/>
    </location>
</feature>
<feature type="strand" evidence="13">
    <location>
        <begin position="339"/>
        <end position="343"/>
    </location>
</feature>
<feature type="helix" evidence="13">
    <location>
        <begin position="345"/>
        <end position="351"/>
    </location>
</feature>
<feature type="helix" evidence="13">
    <location>
        <begin position="356"/>
        <end position="365"/>
    </location>
</feature>
<feature type="strand" evidence="13">
    <location>
        <begin position="368"/>
        <end position="370"/>
    </location>
</feature>
<feature type="helix" evidence="13">
    <location>
        <begin position="372"/>
        <end position="376"/>
    </location>
</feature>
<feature type="turn" evidence="13">
    <location>
        <begin position="378"/>
        <end position="380"/>
    </location>
</feature>
<feature type="helix" evidence="13">
    <location>
        <begin position="381"/>
        <end position="387"/>
    </location>
</feature>
<feature type="strand" evidence="13">
    <location>
        <begin position="393"/>
        <end position="397"/>
    </location>
</feature>
<feature type="helix" evidence="13">
    <location>
        <begin position="402"/>
        <end position="409"/>
    </location>
</feature>
<feature type="strand" evidence="13">
    <location>
        <begin position="413"/>
        <end position="418"/>
    </location>
</feature>
<feature type="helix" evidence="13">
    <location>
        <begin position="422"/>
        <end position="426"/>
    </location>
</feature>
<feature type="strand" evidence="13">
    <location>
        <begin position="444"/>
        <end position="449"/>
    </location>
</feature>
<feature type="helix" evidence="13">
    <location>
        <begin position="450"/>
        <end position="455"/>
    </location>
</feature>
<feature type="helix" evidence="13">
    <location>
        <begin position="457"/>
        <end position="459"/>
    </location>
</feature>
<feature type="helix" evidence="13">
    <location>
        <begin position="460"/>
        <end position="463"/>
    </location>
</feature>
<feature type="helix" evidence="13">
    <location>
        <begin position="464"/>
        <end position="466"/>
    </location>
</feature>
<feature type="helix" evidence="13">
    <location>
        <begin position="472"/>
        <end position="483"/>
    </location>
</feature>
<feature type="helix" evidence="13">
    <location>
        <begin position="489"/>
        <end position="499"/>
    </location>
</feature>
<comment type="function">
    <text evidence="1 4 5 6">Part of an ABC transporter complex EgtU required for the uptake of ergothioneine (EGT), a natural low-molecular weight (LMW) thiol antioxidant (By similarity). Responsible for the translocation of the substrate across the membrane (By similarity). Also contains a C-terminal periplasmic solute-binding domain (SBD) which binds to EGT with sub-micromolar affinity (PubMed:36481738). Does not bind glycine betaine, carnitine, choline, proline, or cholate (Ref.4). Plays a role in bile acid tolerance (PubMed:15686563). Dispensable for choline uptake (PubMed:15686563). Probably not involved in betaine, carnitine or choline mediated osmo- or chill tolerance (PubMed:15686563). Plays a role in enhancing virulence in mice (PubMed:15686563).</text>
</comment>
<comment type="subunit">
    <text evidence="1">The complex is probably composed of at least an ATP-binding protein (EgtUA) and a transmembrane protein (EgtUBC).</text>
</comment>
<comment type="subcellular location">
    <subcellularLocation>
        <location evidence="2">Membrane</location>
        <topology evidence="2">Multi-pass membrane protein</topology>
    </subcellularLocation>
</comment>
<comment type="induction">
    <text evidence="4">Up-regulated by salt and chill (temperature of 10 degrees Celsius) stresses.</text>
</comment>
<comment type="domain">
    <text evidence="1 5">The transmembrane domain (TMD) and the solute-binding domain (SBD) are fused (By similarity). SBD binds to ergothioneine (PubMed:36481738).</text>
</comment>
<comment type="disruption phenotype">
    <text evidence="4">Deletion in strain LO28 significantly increases sensitivity to physiological concentrations of human bile, in vitro (PubMed:15686563). Accumulation of abnormally high levels of bile salts, such as chenodeoxycholic acid (CDC), in the cytoplasm, when strain LO28 is cultured in the presence of bile (PubMed:15686563). Attenuates systemic infection following oral inoculation of BALB/c strain mice with bacterial strain LO28 (PubMed:15686563). No obvious growth defect in strain LO28 in culture when exposed to osmotic or chill stress (PubMed:15686563).</text>
</comment>
<comment type="similarity">
    <text evidence="9">In the N-terminal section; belongs to the binding-protein-dependent transport system permease family.</text>
</comment>
<comment type="similarity">
    <text evidence="9">In the C-terminal section; belongs to the OsmX family.</text>
</comment>
<proteinExistence type="evidence at protein level"/>
<gene>
    <name evidence="8" type="primary">egtUBC</name>
    <name evidence="7" type="synonym">bilEB</name>
    <name evidence="10" type="ordered locus">lmo1422</name>
</gene>